<reference key="1">
    <citation type="submission" date="2005-04" db="EMBL/GenBank/DDBJ databases">
        <authorList>
            <consortium name="NIH - Xenopus Gene Collection (XGC) project"/>
        </authorList>
    </citation>
    <scope>NUCLEOTIDE SEQUENCE [LARGE SCALE MRNA]</scope>
    <source>
        <tissue>Oocyte</tissue>
    </source>
</reference>
<organism>
    <name type="scientific">Xenopus laevis</name>
    <name type="common">African clawed frog</name>
    <dbReference type="NCBI Taxonomy" id="8355"/>
    <lineage>
        <taxon>Eukaryota</taxon>
        <taxon>Metazoa</taxon>
        <taxon>Chordata</taxon>
        <taxon>Craniata</taxon>
        <taxon>Vertebrata</taxon>
        <taxon>Euteleostomi</taxon>
        <taxon>Amphibia</taxon>
        <taxon>Batrachia</taxon>
        <taxon>Anura</taxon>
        <taxon>Pipoidea</taxon>
        <taxon>Pipidae</taxon>
        <taxon>Xenopodinae</taxon>
        <taxon>Xenopus</taxon>
        <taxon>Xenopus</taxon>
    </lineage>
</organism>
<keyword id="KW-0131">Cell cycle</keyword>
<keyword id="KW-0132">Cell division</keyword>
<keyword id="KW-1003">Cell membrane</keyword>
<keyword id="KW-0137">Centromere</keyword>
<keyword id="KW-0158">Chromosome</keyword>
<keyword id="KW-0963">Cytoplasm</keyword>
<keyword id="KW-0206">Cytoskeleton</keyword>
<keyword id="KW-0472">Membrane</keyword>
<keyword id="KW-0498">Mitosis</keyword>
<keyword id="KW-0539">Nucleus</keyword>
<keyword id="KW-1185">Reference proteome</keyword>
<keyword id="KW-0677">Repeat</keyword>
<evidence type="ECO:0000250" key="1">
    <source>
        <dbReference type="UniProtKB" id="Q9P258"/>
    </source>
</evidence>
<evidence type="ECO:0000256" key="2">
    <source>
        <dbReference type="SAM" id="MobiDB-lite"/>
    </source>
</evidence>
<protein>
    <recommendedName>
        <fullName>Protein RCC2 homolog</fullName>
    </recommendedName>
</protein>
<comment type="function">
    <text evidence="1">Multifunctional protein that may affect its functions by regulating the activity of small GTPases, such as RAC1 and RALA. Required for normal progress through the cell cycle, both during interphase and during mitosis. Required for normal attachment of kinetochores to mitotic spindles. Required for normal organization of the microtubule cytoskeleton in interphase cells. Interferes with the activation of RAC1 by guanine nucleotide exchange factors. Prevents accumulation of active, GTP-bound RAC1, and suppresses RAC1-mediated reorganization of the actin cytoskeleton and formation of membrane protrusions. Required for normal cellular responses to contacts with the extracellular matrix of adjacent cells, and for directional cell migration.</text>
</comment>
<comment type="subunit">
    <text evidence="1">Interacts with RAC1. Interacts with CORO1C.</text>
</comment>
<comment type="subcellular location">
    <subcellularLocation>
        <location evidence="1">Nucleus</location>
        <location evidence="1">Nucleolus</location>
    </subcellularLocation>
    <subcellularLocation>
        <location evidence="1">Nucleus</location>
    </subcellularLocation>
    <subcellularLocation>
        <location evidence="1">Cytoplasm</location>
        <location evidence="1">Cytoskeleton</location>
    </subcellularLocation>
    <subcellularLocation>
        <location evidence="1">Chromosome</location>
        <location evidence="1">Centromere</location>
    </subcellularLocation>
    <subcellularLocation>
        <location evidence="1">Cytoplasm</location>
        <location evidence="1">Cytoskeleton</location>
        <location evidence="1">Spindle</location>
    </subcellularLocation>
    <subcellularLocation>
        <location evidence="1">Chromosome</location>
    </subcellularLocation>
    <subcellularLocation>
        <location evidence="1">Midbody</location>
    </subcellularLocation>
    <subcellularLocation>
        <location evidence="1">Cell membrane</location>
        <topology evidence="1">Peripheral membrane protein</topology>
        <orientation evidence="1">Cytoplasmic side</orientation>
    </subcellularLocation>
</comment>
<feature type="chain" id="PRO_0000206655" description="Protein RCC2 homolog">
    <location>
        <begin position="1"/>
        <end position="513"/>
    </location>
</feature>
<feature type="repeat" description="RCC1 1">
    <location>
        <begin position="94"/>
        <end position="156"/>
    </location>
</feature>
<feature type="repeat" description="RCC1 2">
    <location>
        <begin position="159"/>
        <end position="210"/>
    </location>
</feature>
<feature type="repeat" description="RCC1 3">
    <location>
        <begin position="212"/>
        <end position="262"/>
    </location>
</feature>
<feature type="repeat" description="RCC1 4">
    <location>
        <begin position="264"/>
        <end position="338"/>
    </location>
</feature>
<feature type="repeat" description="RCC1 5">
    <location>
        <begin position="339"/>
        <end position="392"/>
    </location>
</feature>
<feature type="repeat" description="RCC1 6">
    <location>
        <begin position="394"/>
        <end position="438"/>
    </location>
</feature>
<feature type="repeat" description="RCC1 7">
    <location>
        <begin position="439"/>
        <end position="492"/>
    </location>
</feature>
<feature type="region of interest" description="Disordered" evidence="2">
    <location>
        <begin position="1"/>
        <end position="70"/>
    </location>
</feature>
<feature type="region of interest" description="Required for interaction with RAC1" evidence="1">
    <location>
        <begin position="309"/>
        <end position="316"/>
    </location>
</feature>
<feature type="region of interest" description="Disordered" evidence="2">
    <location>
        <begin position="492"/>
        <end position="513"/>
    </location>
</feature>
<feature type="compositionally biased region" description="Basic residues" evidence="2">
    <location>
        <begin position="20"/>
        <end position="34"/>
    </location>
</feature>
<feature type="compositionally biased region" description="Basic and acidic residues" evidence="2">
    <location>
        <begin position="492"/>
        <end position="506"/>
    </location>
</feature>
<sequence>MPRKKVTDGSGPGNGAARPANRKKAAASGKKRSRHEFSSDEDDLDGSPGSDGGFQGHNNKRGPAKGATKAPTAVIVTEPEHSKEKIKLEGSKAKGQLLIFGATNWDLIGRKEVPKQQAAYRNLGQNLWGPHRYGCLTGVQVRSVASGSCAAHSLLITVEGKLWSWGRNDKGQLGHGDIKRIDVPKLIESLKGEVFVHAACGRNHTLALTENGSVYAFGENKMGQLGLGNKTDAVPSPAQILYNGQPITKVACGAEFSMIMDCKGNLYSFGCPEYGQLGHNSDGKYIARAQRIEYDCELIARRIAIFIEKTKDGQILPVPNVVVRDIACGINHSLILDSQKRVFSWGFGGYGRLGHSEQRDEMVPRLVKLFDFPGRGAAQIYAGATCSFAVSEMGGLFFWGATNTSRDSTMYPKAVQDLCGWKVRSLACGKSSIIVAADESTISWGPSPTFGELGYGDNKAKSSTTAQEVKTLDGIYSDQVIMGNSHTLVVARDETEQDKEKLKKLPEYNPRTL</sequence>
<gene>
    <name type="primary">rcc2</name>
</gene>
<name>RCC2_XENLA</name>
<proteinExistence type="evidence at transcript level"/>
<accession>Q52KW8</accession>
<dbReference type="EMBL" id="BC094159">
    <property type="protein sequence ID" value="AAH94159.1"/>
    <property type="molecule type" value="mRNA"/>
</dbReference>
<dbReference type="RefSeq" id="NP_001089405.1">
    <property type="nucleotide sequence ID" value="NM_001095936.1"/>
</dbReference>
<dbReference type="RefSeq" id="XP_018080104.1">
    <property type="nucleotide sequence ID" value="XM_018224615.1"/>
</dbReference>
<dbReference type="SMR" id="Q52KW8"/>
<dbReference type="BioGRID" id="592236">
    <property type="interactions" value="1"/>
</dbReference>
<dbReference type="DNASU" id="734455"/>
<dbReference type="GeneID" id="734455"/>
<dbReference type="KEGG" id="xla:734455"/>
<dbReference type="AGR" id="Xenbase:XB-GENE-996300"/>
<dbReference type="CTD" id="734455"/>
<dbReference type="Xenbase" id="XB-GENE-996300">
    <property type="gene designation" value="rcc2.L"/>
</dbReference>
<dbReference type="OMA" id="GKWKNTG"/>
<dbReference type="OrthoDB" id="297375at2759"/>
<dbReference type="Proteomes" id="UP000186698">
    <property type="component" value="Chromosome 7L"/>
</dbReference>
<dbReference type="Bgee" id="734455">
    <property type="expression patterns" value="Expressed in egg cell and 19 other cell types or tissues"/>
</dbReference>
<dbReference type="GO" id="GO:0000775">
    <property type="term" value="C:chromosome, centromeric region"/>
    <property type="evidence" value="ECO:0007669"/>
    <property type="project" value="UniProtKB-SubCell"/>
</dbReference>
<dbReference type="GO" id="GO:0005737">
    <property type="term" value="C:cytoplasm"/>
    <property type="evidence" value="ECO:0007669"/>
    <property type="project" value="UniProtKB-KW"/>
</dbReference>
<dbReference type="GO" id="GO:0016020">
    <property type="term" value="C:membrane"/>
    <property type="evidence" value="ECO:0000318"/>
    <property type="project" value="GO_Central"/>
</dbReference>
<dbReference type="GO" id="GO:0030496">
    <property type="term" value="C:midbody"/>
    <property type="evidence" value="ECO:0007669"/>
    <property type="project" value="UniProtKB-SubCell"/>
</dbReference>
<dbReference type="GO" id="GO:0005730">
    <property type="term" value="C:nucleolus"/>
    <property type="evidence" value="ECO:0007669"/>
    <property type="project" value="UniProtKB-SubCell"/>
</dbReference>
<dbReference type="GO" id="GO:0005886">
    <property type="term" value="C:plasma membrane"/>
    <property type="evidence" value="ECO:0007669"/>
    <property type="project" value="UniProtKB-SubCell"/>
</dbReference>
<dbReference type="GO" id="GO:0005819">
    <property type="term" value="C:spindle"/>
    <property type="evidence" value="ECO:0007669"/>
    <property type="project" value="UniProtKB-SubCell"/>
</dbReference>
<dbReference type="GO" id="GO:0031267">
    <property type="term" value="F:small GTPase binding"/>
    <property type="evidence" value="ECO:0000318"/>
    <property type="project" value="GO_Central"/>
</dbReference>
<dbReference type="GO" id="GO:0051301">
    <property type="term" value="P:cell division"/>
    <property type="evidence" value="ECO:0007669"/>
    <property type="project" value="UniProtKB-KW"/>
</dbReference>
<dbReference type="GO" id="GO:0072356">
    <property type="term" value="P:chromosome passenger complex localization to kinetochore"/>
    <property type="evidence" value="ECO:0000318"/>
    <property type="project" value="GO_Central"/>
</dbReference>
<dbReference type="GO" id="GO:0051987">
    <property type="term" value="P:positive regulation of attachment of spindle microtubules to kinetochore"/>
    <property type="evidence" value="ECO:0000318"/>
    <property type="project" value="GO_Central"/>
</dbReference>
<dbReference type="FunFam" id="2.130.10.30:FF:000022">
    <property type="entry name" value="RCC2 isoform 1"/>
    <property type="match status" value="1"/>
</dbReference>
<dbReference type="FunFam" id="2.130.10.30:FF:000009">
    <property type="entry name" value="Regulator of chromosome condensation 2"/>
    <property type="match status" value="1"/>
</dbReference>
<dbReference type="Gene3D" id="2.130.10.30">
    <property type="entry name" value="Regulator of chromosome condensation 1/beta-lactamase-inhibitor protein II"/>
    <property type="match status" value="2"/>
</dbReference>
<dbReference type="InterPro" id="IPR009091">
    <property type="entry name" value="RCC1/BLIP-II"/>
</dbReference>
<dbReference type="InterPro" id="IPR028641">
    <property type="entry name" value="RCC2"/>
</dbReference>
<dbReference type="InterPro" id="IPR000408">
    <property type="entry name" value="Reg_chr_condens"/>
</dbReference>
<dbReference type="PANTHER" id="PTHR46207">
    <property type="entry name" value="PROTEIN RCC2"/>
    <property type="match status" value="1"/>
</dbReference>
<dbReference type="PANTHER" id="PTHR46207:SF1">
    <property type="entry name" value="PROTEIN RCC2"/>
    <property type="match status" value="1"/>
</dbReference>
<dbReference type="Pfam" id="PF25390">
    <property type="entry name" value="WD40_RLD"/>
    <property type="match status" value="1"/>
</dbReference>
<dbReference type="PRINTS" id="PR00633">
    <property type="entry name" value="RCCNDNSATION"/>
</dbReference>
<dbReference type="SUPFAM" id="SSF50985">
    <property type="entry name" value="RCC1/BLIP-II"/>
    <property type="match status" value="1"/>
</dbReference>
<dbReference type="PROSITE" id="PS00626">
    <property type="entry name" value="RCC1_2"/>
    <property type="match status" value="1"/>
</dbReference>
<dbReference type="PROSITE" id="PS50012">
    <property type="entry name" value="RCC1_3"/>
    <property type="match status" value="5"/>
</dbReference>